<accession>A9KYG5</accession>
<sequence length="249" mass="26601">MIRILVSNDDGVNAPGIKALTEALAEIATVLTVGPDRNCSGASNSLTLTNPLRINRLDNGYISVHGTPTDCVHLAIRELYDGEPDMVVSGINAGANMGDDTLYSGTVAAAMEGRFLGFPAVAISLNGRKFEHYQSAAVYARRIVQGLLAQPLAKDQILNVNVPDLPLDQIKGIKVTRLGARHKAEGIVRTQDPAGREIFWLGPPGQEQDATDGTDFHAVANGYVSITPLTVDLTAYGQLTALQNWVDKI</sequence>
<feature type="chain" id="PRO_0000335272" description="5'-nucleotidase SurE">
    <location>
        <begin position="1"/>
        <end position="249"/>
    </location>
</feature>
<feature type="binding site" evidence="1">
    <location>
        <position position="9"/>
    </location>
    <ligand>
        <name>a divalent metal cation</name>
        <dbReference type="ChEBI" id="CHEBI:60240"/>
    </ligand>
</feature>
<feature type="binding site" evidence="1">
    <location>
        <position position="10"/>
    </location>
    <ligand>
        <name>a divalent metal cation</name>
        <dbReference type="ChEBI" id="CHEBI:60240"/>
    </ligand>
</feature>
<feature type="binding site" evidence="1">
    <location>
        <position position="40"/>
    </location>
    <ligand>
        <name>a divalent metal cation</name>
        <dbReference type="ChEBI" id="CHEBI:60240"/>
    </ligand>
</feature>
<feature type="binding site" evidence="1">
    <location>
        <position position="92"/>
    </location>
    <ligand>
        <name>a divalent metal cation</name>
        <dbReference type="ChEBI" id="CHEBI:60240"/>
    </ligand>
</feature>
<reference key="1">
    <citation type="submission" date="2007-11" db="EMBL/GenBank/DDBJ databases">
        <title>Complete sequence of chromosome of Shewanella baltica OS195.</title>
        <authorList>
            <consortium name="US DOE Joint Genome Institute"/>
            <person name="Copeland A."/>
            <person name="Lucas S."/>
            <person name="Lapidus A."/>
            <person name="Barry K."/>
            <person name="Glavina del Rio T."/>
            <person name="Dalin E."/>
            <person name="Tice H."/>
            <person name="Pitluck S."/>
            <person name="Chain P."/>
            <person name="Malfatti S."/>
            <person name="Shin M."/>
            <person name="Vergez L."/>
            <person name="Schmutz J."/>
            <person name="Larimer F."/>
            <person name="Land M."/>
            <person name="Hauser L."/>
            <person name="Kyrpides N."/>
            <person name="Kim E."/>
            <person name="Brettar I."/>
            <person name="Rodrigues J."/>
            <person name="Konstantinidis K."/>
            <person name="Klappenbach J."/>
            <person name="Hofle M."/>
            <person name="Tiedje J."/>
            <person name="Richardson P."/>
        </authorList>
    </citation>
    <scope>NUCLEOTIDE SEQUENCE [LARGE SCALE GENOMIC DNA]</scope>
    <source>
        <strain>OS195</strain>
    </source>
</reference>
<keyword id="KW-0963">Cytoplasm</keyword>
<keyword id="KW-0378">Hydrolase</keyword>
<keyword id="KW-0479">Metal-binding</keyword>
<keyword id="KW-0547">Nucleotide-binding</keyword>
<name>SURE_SHEB9</name>
<protein>
    <recommendedName>
        <fullName evidence="1">5'-nucleotidase SurE</fullName>
        <ecNumber evidence="1">3.1.3.5</ecNumber>
    </recommendedName>
    <alternativeName>
        <fullName evidence="1">Nucleoside 5'-monophosphate phosphohydrolase</fullName>
    </alternativeName>
</protein>
<proteinExistence type="inferred from homology"/>
<dbReference type="EC" id="3.1.3.5" evidence="1"/>
<dbReference type="EMBL" id="CP000891">
    <property type="protein sequence ID" value="ABX50436.1"/>
    <property type="molecule type" value="Genomic_DNA"/>
</dbReference>
<dbReference type="RefSeq" id="WP_012197443.1">
    <property type="nucleotide sequence ID" value="NC_009997.1"/>
</dbReference>
<dbReference type="SMR" id="A9KYG5"/>
<dbReference type="GeneID" id="11773328"/>
<dbReference type="KEGG" id="sbn:Sbal195_3274"/>
<dbReference type="HOGENOM" id="CLU_045192_1_2_6"/>
<dbReference type="Proteomes" id="UP000000770">
    <property type="component" value="Chromosome"/>
</dbReference>
<dbReference type="GO" id="GO:0005737">
    <property type="term" value="C:cytoplasm"/>
    <property type="evidence" value="ECO:0007669"/>
    <property type="project" value="UniProtKB-SubCell"/>
</dbReference>
<dbReference type="GO" id="GO:0008254">
    <property type="term" value="F:3'-nucleotidase activity"/>
    <property type="evidence" value="ECO:0007669"/>
    <property type="project" value="TreeGrafter"/>
</dbReference>
<dbReference type="GO" id="GO:0008253">
    <property type="term" value="F:5'-nucleotidase activity"/>
    <property type="evidence" value="ECO:0007669"/>
    <property type="project" value="UniProtKB-UniRule"/>
</dbReference>
<dbReference type="GO" id="GO:0004309">
    <property type="term" value="F:exopolyphosphatase activity"/>
    <property type="evidence" value="ECO:0007669"/>
    <property type="project" value="TreeGrafter"/>
</dbReference>
<dbReference type="GO" id="GO:0046872">
    <property type="term" value="F:metal ion binding"/>
    <property type="evidence" value="ECO:0007669"/>
    <property type="project" value="UniProtKB-UniRule"/>
</dbReference>
<dbReference type="GO" id="GO:0000166">
    <property type="term" value="F:nucleotide binding"/>
    <property type="evidence" value="ECO:0007669"/>
    <property type="project" value="UniProtKB-KW"/>
</dbReference>
<dbReference type="FunFam" id="3.40.1210.10:FF:000001">
    <property type="entry name" value="5'/3'-nucleotidase SurE"/>
    <property type="match status" value="1"/>
</dbReference>
<dbReference type="Gene3D" id="3.40.1210.10">
    <property type="entry name" value="Survival protein SurE-like phosphatase/nucleotidase"/>
    <property type="match status" value="1"/>
</dbReference>
<dbReference type="HAMAP" id="MF_00060">
    <property type="entry name" value="SurE"/>
    <property type="match status" value="1"/>
</dbReference>
<dbReference type="InterPro" id="IPR030048">
    <property type="entry name" value="SurE"/>
</dbReference>
<dbReference type="InterPro" id="IPR002828">
    <property type="entry name" value="SurE-like_Pase/nucleotidase"/>
</dbReference>
<dbReference type="InterPro" id="IPR036523">
    <property type="entry name" value="SurE-like_sf"/>
</dbReference>
<dbReference type="NCBIfam" id="NF001489">
    <property type="entry name" value="PRK00346.1-3"/>
    <property type="match status" value="1"/>
</dbReference>
<dbReference type="NCBIfam" id="NF001490">
    <property type="entry name" value="PRK00346.1-4"/>
    <property type="match status" value="1"/>
</dbReference>
<dbReference type="NCBIfam" id="TIGR00087">
    <property type="entry name" value="surE"/>
    <property type="match status" value="1"/>
</dbReference>
<dbReference type="PANTHER" id="PTHR30457">
    <property type="entry name" value="5'-NUCLEOTIDASE SURE"/>
    <property type="match status" value="1"/>
</dbReference>
<dbReference type="PANTHER" id="PTHR30457:SF12">
    <property type="entry name" value="5'_3'-NUCLEOTIDASE SURE"/>
    <property type="match status" value="1"/>
</dbReference>
<dbReference type="Pfam" id="PF01975">
    <property type="entry name" value="SurE"/>
    <property type="match status" value="1"/>
</dbReference>
<dbReference type="SUPFAM" id="SSF64167">
    <property type="entry name" value="SurE-like"/>
    <property type="match status" value="1"/>
</dbReference>
<evidence type="ECO:0000255" key="1">
    <source>
        <dbReference type="HAMAP-Rule" id="MF_00060"/>
    </source>
</evidence>
<gene>
    <name evidence="1" type="primary">surE</name>
    <name type="ordered locus">Sbal195_3274</name>
</gene>
<organism>
    <name type="scientific">Shewanella baltica (strain OS195)</name>
    <dbReference type="NCBI Taxonomy" id="399599"/>
    <lineage>
        <taxon>Bacteria</taxon>
        <taxon>Pseudomonadati</taxon>
        <taxon>Pseudomonadota</taxon>
        <taxon>Gammaproteobacteria</taxon>
        <taxon>Alteromonadales</taxon>
        <taxon>Shewanellaceae</taxon>
        <taxon>Shewanella</taxon>
    </lineage>
</organism>
<comment type="function">
    <text evidence="1">Nucleotidase that shows phosphatase activity on nucleoside 5'-monophosphates.</text>
</comment>
<comment type="catalytic activity">
    <reaction evidence="1">
        <text>a ribonucleoside 5'-phosphate + H2O = a ribonucleoside + phosphate</text>
        <dbReference type="Rhea" id="RHEA:12484"/>
        <dbReference type="ChEBI" id="CHEBI:15377"/>
        <dbReference type="ChEBI" id="CHEBI:18254"/>
        <dbReference type="ChEBI" id="CHEBI:43474"/>
        <dbReference type="ChEBI" id="CHEBI:58043"/>
        <dbReference type="EC" id="3.1.3.5"/>
    </reaction>
</comment>
<comment type="cofactor">
    <cofactor evidence="1">
        <name>a divalent metal cation</name>
        <dbReference type="ChEBI" id="CHEBI:60240"/>
    </cofactor>
    <text evidence="1">Binds 1 divalent metal cation per subunit.</text>
</comment>
<comment type="subcellular location">
    <subcellularLocation>
        <location evidence="1">Cytoplasm</location>
    </subcellularLocation>
</comment>
<comment type="similarity">
    <text evidence="1">Belongs to the SurE nucleotidase family.</text>
</comment>